<sequence length="436" mass="49398">MARLDKVKGTRDLLPEEMAKRRWVFERIREVFEGFNFQEVLTPTFEYTELFKLRSGEEVVKQLYAFQDKGGRDISLRPDMTSSVARLYVNRFQNAPKPIKWYYIANMFRYEEPQSGRYREFWQAGVELIGSDRVEADAEVIALFTQSYLAVGLEDFTVNIGDRILLDEFAKMLGVEDDIGLMRLIDKKDKMSREEFVGALREFGLNDDGVEKVLSLIEIKGLPDEVLPKAEELFTSEEAKAEIKRLYELVDLLDAYGVSKWVRIDLGIARGFDYYTSVVFEAIAPNDLGIGSIGGGGRYDNLIEVFGGKPTPATGFAIGIERLIPILEWKGLLPEIKLRPDVYVIPIGDDREVKKTAIEITQGLREATVRADIELTGRKLRKALDYAGKLGVPYVVLVGKKDLEAGKVTLRDMKSGEQKSIEKERAVEEILNILGV</sequence>
<proteinExistence type="inferred from homology"/>
<protein>
    <recommendedName>
        <fullName evidence="1">Histidine--tRNA ligase</fullName>
        <ecNumber evidence="1">6.1.1.21</ecNumber>
    </recommendedName>
    <alternativeName>
        <fullName evidence="1">Histidyl-tRNA synthetase</fullName>
        <shortName evidence="1">HisRS</shortName>
    </alternativeName>
</protein>
<accession>Q5JIM2</accession>
<feature type="chain" id="PRO_0000136323" description="Histidine--tRNA ligase">
    <location>
        <begin position="1"/>
        <end position="436"/>
    </location>
</feature>
<organism>
    <name type="scientific">Thermococcus kodakarensis (strain ATCC BAA-918 / JCM 12380 / KOD1)</name>
    <name type="common">Pyrococcus kodakaraensis (strain KOD1)</name>
    <dbReference type="NCBI Taxonomy" id="69014"/>
    <lineage>
        <taxon>Archaea</taxon>
        <taxon>Methanobacteriati</taxon>
        <taxon>Methanobacteriota</taxon>
        <taxon>Thermococci</taxon>
        <taxon>Thermococcales</taxon>
        <taxon>Thermococcaceae</taxon>
        <taxon>Thermococcus</taxon>
    </lineage>
</organism>
<dbReference type="EC" id="6.1.1.21" evidence="1"/>
<dbReference type="EMBL" id="AP006878">
    <property type="protein sequence ID" value="BAD85751.1"/>
    <property type="molecule type" value="Genomic_DNA"/>
</dbReference>
<dbReference type="RefSeq" id="WP_011250513.1">
    <property type="nucleotide sequence ID" value="NC_006624.1"/>
</dbReference>
<dbReference type="SMR" id="Q5JIM2"/>
<dbReference type="FunCoup" id="Q5JIM2">
    <property type="interactions" value="180"/>
</dbReference>
<dbReference type="STRING" id="69014.TK1562"/>
<dbReference type="EnsemblBacteria" id="BAD85751">
    <property type="protein sequence ID" value="BAD85751"/>
    <property type="gene ID" value="TK1562"/>
</dbReference>
<dbReference type="GeneID" id="78448090"/>
<dbReference type="KEGG" id="tko:TK1562"/>
<dbReference type="PATRIC" id="fig|69014.16.peg.1522"/>
<dbReference type="eggNOG" id="arCOG00404">
    <property type="taxonomic scope" value="Archaea"/>
</dbReference>
<dbReference type="HOGENOM" id="CLU_025113_3_1_2"/>
<dbReference type="InParanoid" id="Q5JIM2"/>
<dbReference type="OrthoDB" id="8659at2157"/>
<dbReference type="PhylomeDB" id="Q5JIM2"/>
<dbReference type="Proteomes" id="UP000000536">
    <property type="component" value="Chromosome"/>
</dbReference>
<dbReference type="GO" id="GO:0005737">
    <property type="term" value="C:cytoplasm"/>
    <property type="evidence" value="ECO:0007669"/>
    <property type="project" value="UniProtKB-SubCell"/>
</dbReference>
<dbReference type="GO" id="GO:0005524">
    <property type="term" value="F:ATP binding"/>
    <property type="evidence" value="ECO:0007669"/>
    <property type="project" value="UniProtKB-UniRule"/>
</dbReference>
<dbReference type="GO" id="GO:0004821">
    <property type="term" value="F:histidine-tRNA ligase activity"/>
    <property type="evidence" value="ECO:0000318"/>
    <property type="project" value="GO_Central"/>
</dbReference>
<dbReference type="GO" id="GO:0006427">
    <property type="term" value="P:histidyl-tRNA aminoacylation"/>
    <property type="evidence" value="ECO:0000318"/>
    <property type="project" value="GO_Central"/>
</dbReference>
<dbReference type="GO" id="GO:0000105">
    <property type="term" value="P:L-histidine biosynthetic process"/>
    <property type="evidence" value="ECO:0007669"/>
    <property type="project" value="InterPro"/>
</dbReference>
<dbReference type="CDD" id="cd00773">
    <property type="entry name" value="HisRS-like_core"/>
    <property type="match status" value="1"/>
</dbReference>
<dbReference type="CDD" id="cd00859">
    <property type="entry name" value="HisRS_anticodon"/>
    <property type="match status" value="1"/>
</dbReference>
<dbReference type="FunFam" id="3.30.930.10:FF:000054">
    <property type="entry name" value="Histidine--tRNA ligase chloroplastic/mitochondrial"/>
    <property type="match status" value="1"/>
</dbReference>
<dbReference type="Gene3D" id="3.40.50.800">
    <property type="entry name" value="Anticodon-binding domain"/>
    <property type="match status" value="1"/>
</dbReference>
<dbReference type="Gene3D" id="3.30.930.10">
    <property type="entry name" value="Bira Bifunctional Protein, Domain 2"/>
    <property type="match status" value="1"/>
</dbReference>
<dbReference type="HAMAP" id="MF_00127">
    <property type="entry name" value="His_tRNA_synth"/>
    <property type="match status" value="1"/>
</dbReference>
<dbReference type="HAMAP" id="MF_00125">
    <property type="entry name" value="HisZ"/>
    <property type="match status" value="1"/>
</dbReference>
<dbReference type="InterPro" id="IPR006195">
    <property type="entry name" value="aa-tRNA-synth_II"/>
</dbReference>
<dbReference type="InterPro" id="IPR045864">
    <property type="entry name" value="aa-tRNA-synth_II/BPL/LPL"/>
</dbReference>
<dbReference type="InterPro" id="IPR004154">
    <property type="entry name" value="Anticodon-bd"/>
</dbReference>
<dbReference type="InterPro" id="IPR036621">
    <property type="entry name" value="Anticodon-bd_dom_sf"/>
</dbReference>
<dbReference type="InterPro" id="IPR015807">
    <property type="entry name" value="His-tRNA-ligase"/>
</dbReference>
<dbReference type="InterPro" id="IPR041715">
    <property type="entry name" value="HisRS-like_core"/>
</dbReference>
<dbReference type="InterPro" id="IPR004516">
    <property type="entry name" value="HisRS/HisZ"/>
</dbReference>
<dbReference type="InterPro" id="IPR033656">
    <property type="entry name" value="HisRS_anticodon"/>
</dbReference>
<dbReference type="InterPro" id="IPR004517">
    <property type="entry name" value="HisZ"/>
</dbReference>
<dbReference type="NCBIfam" id="TIGR00442">
    <property type="entry name" value="hisS"/>
    <property type="match status" value="1"/>
</dbReference>
<dbReference type="NCBIfam" id="TIGR00443">
    <property type="entry name" value="hisZ_biosyn_reg"/>
    <property type="match status" value="1"/>
</dbReference>
<dbReference type="PANTHER" id="PTHR43707:SF1">
    <property type="entry name" value="HISTIDINE--TRNA LIGASE, MITOCHONDRIAL-RELATED"/>
    <property type="match status" value="1"/>
</dbReference>
<dbReference type="PANTHER" id="PTHR43707">
    <property type="entry name" value="HISTIDYL-TRNA SYNTHETASE"/>
    <property type="match status" value="1"/>
</dbReference>
<dbReference type="Pfam" id="PF03129">
    <property type="entry name" value="HGTP_anticodon"/>
    <property type="match status" value="1"/>
</dbReference>
<dbReference type="Pfam" id="PF13393">
    <property type="entry name" value="tRNA-synt_His"/>
    <property type="match status" value="1"/>
</dbReference>
<dbReference type="PIRSF" id="PIRSF001549">
    <property type="entry name" value="His-tRNA_synth"/>
    <property type="match status" value="1"/>
</dbReference>
<dbReference type="SUPFAM" id="SSF52954">
    <property type="entry name" value="Class II aaRS ABD-related"/>
    <property type="match status" value="1"/>
</dbReference>
<dbReference type="SUPFAM" id="SSF55681">
    <property type="entry name" value="Class II aaRS and biotin synthetases"/>
    <property type="match status" value="1"/>
</dbReference>
<dbReference type="PROSITE" id="PS50862">
    <property type="entry name" value="AA_TRNA_LIGASE_II"/>
    <property type="match status" value="1"/>
</dbReference>
<comment type="catalytic activity">
    <reaction evidence="1">
        <text>tRNA(His) + L-histidine + ATP = L-histidyl-tRNA(His) + AMP + diphosphate + H(+)</text>
        <dbReference type="Rhea" id="RHEA:17313"/>
        <dbReference type="Rhea" id="RHEA-COMP:9665"/>
        <dbReference type="Rhea" id="RHEA-COMP:9689"/>
        <dbReference type="ChEBI" id="CHEBI:15378"/>
        <dbReference type="ChEBI" id="CHEBI:30616"/>
        <dbReference type="ChEBI" id="CHEBI:33019"/>
        <dbReference type="ChEBI" id="CHEBI:57595"/>
        <dbReference type="ChEBI" id="CHEBI:78442"/>
        <dbReference type="ChEBI" id="CHEBI:78527"/>
        <dbReference type="ChEBI" id="CHEBI:456215"/>
        <dbReference type="EC" id="6.1.1.21"/>
    </reaction>
</comment>
<comment type="subcellular location">
    <subcellularLocation>
        <location evidence="1">Cytoplasm</location>
    </subcellularLocation>
</comment>
<comment type="similarity">
    <text evidence="1">Belongs to the class-II aminoacyl-tRNA synthetase family.</text>
</comment>
<evidence type="ECO:0000255" key="1">
    <source>
        <dbReference type="HAMAP-Rule" id="MF_00127"/>
    </source>
</evidence>
<name>SYH_THEKO</name>
<gene>
    <name evidence="1" type="primary">hisS</name>
    <name type="ordered locus">TK1562</name>
</gene>
<keyword id="KW-0030">Aminoacyl-tRNA synthetase</keyword>
<keyword id="KW-0067">ATP-binding</keyword>
<keyword id="KW-0963">Cytoplasm</keyword>
<keyword id="KW-0436">Ligase</keyword>
<keyword id="KW-0547">Nucleotide-binding</keyword>
<keyword id="KW-0648">Protein biosynthesis</keyword>
<keyword id="KW-1185">Reference proteome</keyword>
<reference key="1">
    <citation type="journal article" date="2005" name="Genome Res.">
        <title>Complete genome sequence of the hyperthermophilic archaeon Thermococcus kodakaraensis KOD1 and comparison with Pyrococcus genomes.</title>
        <authorList>
            <person name="Fukui T."/>
            <person name="Atomi H."/>
            <person name="Kanai T."/>
            <person name="Matsumi R."/>
            <person name="Fujiwara S."/>
            <person name="Imanaka T."/>
        </authorList>
    </citation>
    <scope>NUCLEOTIDE SEQUENCE [LARGE SCALE GENOMIC DNA]</scope>
    <source>
        <strain>ATCC BAA-918 / JCM 12380 / KOD1</strain>
    </source>
</reference>